<comment type="function">
    <text evidence="1">Catalytic subunit of the mRNA-capping methyltransferase RNMT:RAMAC complex that methylates the N7 position of the added guanosine to the 5'-cap structure of mRNAs. Binds RNA containing 5'-terminal GpppC.</text>
</comment>
<comment type="catalytic activity">
    <reaction evidence="1 2">
        <text>a 5'-end (5'-triphosphoguanosine)-ribonucleoside in mRNA + S-adenosyl-L-methionine = a 5'-end (N(7)-methyl 5'-triphosphoguanosine)-ribonucleoside in mRNA + S-adenosyl-L-homocysteine</text>
        <dbReference type="Rhea" id="RHEA:67008"/>
        <dbReference type="Rhea" id="RHEA-COMP:17166"/>
        <dbReference type="Rhea" id="RHEA-COMP:17167"/>
        <dbReference type="ChEBI" id="CHEBI:57856"/>
        <dbReference type="ChEBI" id="CHEBI:59789"/>
        <dbReference type="ChEBI" id="CHEBI:156461"/>
        <dbReference type="ChEBI" id="CHEBI:167617"/>
        <dbReference type="EC" id="2.1.1.56"/>
    </reaction>
</comment>
<comment type="subcellular location">
    <subcellularLocation>
        <location evidence="1">Nucleus</location>
    </subcellularLocation>
</comment>
<comment type="developmental stage">
    <text evidence="4">Expressed both maternally and zygotically. Expression decreases after gastrulation.</text>
</comment>
<comment type="similarity">
    <text evidence="2">Belongs to the class I-like SAM-binding methyltransferase superfamily. mRNA cap 0 methyltransferase family.</text>
</comment>
<proteinExistence type="evidence at transcript level"/>
<keyword id="KW-0489">Methyltransferase</keyword>
<keyword id="KW-0506">mRNA capping</keyword>
<keyword id="KW-0507">mRNA processing</keyword>
<keyword id="KW-0539">Nucleus</keyword>
<keyword id="KW-1185">Reference proteome</keyword>
<keyword id="KW-0694">RNA-binding</keyword>
<keyword id="KW-0949">S-adenosyl-L-methionine</keyword>
<keyword id="KW-0808">Transferase</keyword>
<dbReference type="EC" id="2.1.1.56" evidence="1"/>
<dbReference type="EMBL" id="AF218795">
    <property type="protein sequence ID" value="AAF43145.1"/>
    <property type="molecule type" value="mRNA"/>
</dbReference>
<dbReference type="EMBL" id="BC094147">
    <property type="protein sequence ID" value="AAH94147.1"/>
    <property type="molecule type" value="mRNA"/>
</dbReference>
<dbReference type="PIR" id="JC7199">
    <property type="entry name" value="JC7199"/>
</dbReference>
<dbReference type="RefSeq" id="NP_001082004.1">
    <property type="nucleotide sequence ID" value="NM_001088535.1"/>
</dbReference>
<dbReference type="RefSeq" id="XP_018121821.1">
    <property type="nucleotide sequence ID" value="XM_018266332.1"/>
</dbReference>
<dbReference type="RefSeq" id="XP_018121822.1">
    <property type="nucleotide sequence ID" value="XM_018266333.1"/>
</dbReference>
<dbReference type="RefSeq" id="XP_018121823.1">
    <property type="nucleotide sequence ID" value="XM_018266334.1"/>
</dbReference>
<dbReference type="SMR" id="Q9I8S2"/>
<dbReference type="IntAct" id="Q9I8S2">
    <property type="interactions" value="2"/>
</dbReference>
<dbReference type="DNASU" id="398173"/>
<dbReference type="GeneID" id="398173"/>
<dbReference type="KEGG" id="xla:398173"/>
<dbReference type="AGR" id="Xenbase:XB-GENE-944374"/>
<dbReference type="CTD" id="398173"/>
<dbReference type="Xenbase" id="XB-GENE-944374">
    <property type="gene designation" value="rnmt.L"/>
</dbReference>
<dbReference type="OMA" id="LITGDCF"/>
<dbReference type="OrthoDB" id="10248867at2759"/>
<dbReference type="BRENDA" id="2.1.1.56">
    <property type="organism ID" value="6725"/>
</dbReference>
<dbReference type="Proteomes" id="UP000186698">
    <property type="component" value="Chromosome 6L"/>
</dbReference>
<dbReference type="Bgee" id="398173">
    <property type="expression patterns" value="Expressed in gastrula and 19 other cell types or tissues"/>
</dbReference>
<dbReference type="GO" id="GO:0160130">
    <property type="term" value="C:mRNA cap methyltransferase RNMT:RAMAC complex"/>
    <property type="evidence" value="ECO:0000250"/>
    <property type="project" value="UniProtKB"/>
</dbReference>
<dbReference type="GO" id="GO:0005634">
    <property type="term" value="C:nucleus"/>
    <property type="evidence" value="ECO:0000250"/>
    <property type="project" value="UniProtKB"/>
</dbReference>
<dbReference type="GO" id="GO:0004482">
    <property type="term" value="F:mRNA 5'-cap (guanine-N7-)-methyltransferase activity"/>
    <property type="evidence" value="ECO:0000250"/>
    <property type="project" value="UniProtKB"/>
</dbReference>
<dbReference type="GO" id="GO:0003723">
    <property type="term" value="F:RNA binding"/>
    <property type="evidence" value="ECO:0000250"/>
    <property type="project" value="UniProtKB"/>
</dbReference>
<dbReference type="GO" id="GO:0006370">
    <property type="term" value="P:7-methylguanosine mRNA capping"/>
    <property type="evidence" value="ECO:0000250"/>
    <property type="project" value="UniProtKB"/>
</dbReference>
<dbReference type="CDD" id="cd02440">
    <property type="entry name" value="AdoMet_MTases"/>
    <property type="match status" value="1"/>
</dbReference>
<dbReference type="Gene3D" id="3.40.50.150">
    <property type="entry name" value="Vaccinia Virus protein VP39"/>
    <property type="match status" value="1"/>
</dbReference>
<dbReference type="InterPro" id="IPR004971">
    <property type="entry name" value="mRNA_G-N7_MeTrfase_dom"/>
</dbReference>
<dbReference type="InterPro" id="IPR016899">
    <property type="entry name" value="mRNA_G-N7_MeTrfase_euk"/>
</dbReference>
<dbReference type="InterPro" id="IPR039753">
    <property type="entry name" value="RG7MT1"/>
</dbReference>
<dbReference type="InterPro" id="IPR029063">
    <property type="entry name" value="SAM-dependent_MTases_sf"/>
</dbReference>
<dbReference type="PANTHER" id="PTHR12189:SF2">
    <property type="entry name" value="MRNA CAP GUANINE-N7 METHYLTRANSFERASE"/>
    <property type="match status" value="1"/>
</dbReference>
<dbReference type="PANTHER" id="PTHR12189">
    <property type="entry name" value="MRNA GUANINE-7- METHYLTRANSFERASE"/>
    <property type="match status" value="1"/>
</dbReference>
<dbReference type="Pfam" id="PF03291">
    <property type="entry name" value="mRNA_G-N7_MeTrfase"/>
    <property type="match status" value="1"/>
</dbReference>
<dbReference type="PIRSF" id="PIRSF028762">
    <property type="entry name" value="ABD1"/>
    <property type="match status" value="1"/>
</dbReference>
<dbReference type="SUPFAM" id="SSF53335">
    <property type="entry name" value="S-adenosyl-L-methionine-dependent methyltransferases"/>
    <property type="match status" value="1"/>
</dbReference>
<dbReference type="PROSITE" id="PS51562">
    <property type="entry name" value="RNA_CAP0_MT"/>
    <property type="match status" value="1"/>
</dbReference>
<gene>
    <name type="primary">rnmt</name>
</gene>
<reference key="1">
    <citation type="journal article" date="2000" name="Biochem. Biophys. Res. Commun.">
        <title>Cloning and characterization of mRNA capping enzyme and mRNA (guanine-7-)-methyltransferase cDNAs from Xenopus laevis.</title>
        <authorList>
            <person name="Yokoska J."/>
            <person name="Tsukamoto T."/>
            <person name="Miura K."/>
            <person name="Shiokawa K."/>
            <person name="Mizumoto K."/>
        </authorList>
    </citation>
    <scope>NUCLEOTIDE SEQUENCE [MRNA]</scope>
    <scope>FUNCTION</scope>
    <scope>DEVELOPMENTAL STAGE</scope>
</reference>
<reference key="2">
    <citation type="submission" date="2005-04" db="EMBL/GenBank/DDBJ databases">
        <authorList>
            <consortium name="NIH - Xenopus Gene Collection (XGC) project"/>
        </authorList>
    </citation>
    <scope>NUCLEOTIDE SEQUENCE [LARGE SCALE MRNA]</scope>
    <source>
        <tissue>Oocyte</tissue>
    </source>
</reference>
<feature type="chain" id="PRO_0000248326" description="mRNA cap guanine-N(7) methyltransferase">
    <location>
        <begin position="1"/>
        <end position="402"/>
    </location>
</feature>
<feature type="domain" description="mRNA cap 0 methyltransferase" evidence="2">
    <location>
        <begin position="94"/>
        <end position="401"/>
    </location>
</feature>
<feature type="region of interest" description="Disordered" evidence="3">
    <location>
        <begin position="1"/>
        <end position="75"/>
    </location>
</feature>
<feature type="compositionally biased region" description="Basic and acidic residues" evidence="3">
    <location>
        <begin position="1"/>
        <end position="11"/>
    </location>
</feature>
<feature type="compositionally biased region" description="Polar residues" evidence="3">
    <location>
        <begin position="35"/>
        <end position="50"/>
    </location>
</feature>
<feature type="compositionally biased region" description="Basic and acidic residues" evidence="3">
    <location>
        <begin position="55"/>
        <end position="72"/>
    </location>
</feature>
<feature type="binding site" evidence="2">
    <location>
        <begin position="103"/>
        <end position="104"/>
    </location>
    <ligand>
        <name>mRNA</name>
        <dbReference type="ChEBI" id="CHEBI:33699"/>
    </ligand>
    <ligandPart>
        <name>mRNA cap</name>
    </ligandPart>
</feature>
<feature type="binding site" evidence="2">
    <location>
        <position position="107"/>
    </location>
    <ligand>
        <name>S-adenosyl-L-methionine</name>
        <dbReference type="ChEBI" id="CHEBI:59789"/>
    </ligand>
</feature>
<feature type="binding site" evidence="2">
    <location>
        <position position="131"/>
    </location>
    <ligand>
        <name>S-adenosyl-L-methionine</name>
        <dbReference type="ChEBI" id="CHEBI:59789"/>
    </ligand>
</feature>
<feature type="binding site" evidence="2">
    <location>
        <position position="153"/>
    </location>
    <ligand>
        <name>S-adenosyl-L-methionine</name>
        <dbReference type="ChEBI" id="CHEBI:59789"/>
    </ligand>
</feature>
<feature type="binding site" evidence="1">
    <location>
        <position position="187"/>
    </location>
    <ligand>
        <name>S-adenosyl-L-methionine</name>
        <dbReference type="ChEBI" id="CHEBI:59789"/>
    </ligand>
</feature>
<feature type="binding site" evidence="1">
    <location>
        <position position="210"/>
    </location>
    <ligand>
        <name>S-adenosyl-L-methionine</name>
        <dbReference type="ChEBI" id="CHEBI:59789"/>
    </ligand>
</feature>
<feature type="binding site" evidence="1">
    <location>
        <position position="215"/>
    </location>
    <ligand>
        <name>S-adenosyl-L-methionine</name>
        <dbReference type="ChEBI" id="CHEBI:59789"/>
    </ligand>
</feature>
<feature type="site" description="mRNA cap binding" evidence="2">
    <location>
        <position position="134"/>
    </location>
</feature>
<feature type="site" description="mRNA cap binding" evidence="2">
    <location>
        <position position="140"/>
    </location>
</feature>
<feature type="site" description="mRNA cap binding" evidence="2">
    <location>
        <position position="165"/>
    </location>
</feature>
<feature type="site" description="mRNA cap binding" evidence="2">
    <location>
        <position position="214"/>
    </location>
</feature>
<feature type="site" description="mRNA cap binding" evidence="2">
    <location>
        <position position="296"/>
    </location>
</feature>
<feature type="site" description="mRNA cap binding" evidence="2">
    <location>
        <position position="393"/>
    </location>
</feature>
<feature type="sequence conflict" description="In Ref. 2; AAH94147." evidence="5" ref="2">
    <original>M</original>
    <variation>I</variation>
    <location>
        <position position="106"/>
    </location>
</feature>
<name>MCES_XENLA</name>
<sequence>MDHVLNPEEKVSQTNSESGGADGAFQHVKGEHSSPKLSASEKSLPGNTKSPLKRKAAEPDSPPKRPRLEEGHGSLVVTHYNELPETGLEIRSQSRIFHLRNFNNWMKSALIGEFVEKVQQRTRNITVLDLGCGKGGDLLKWRKGGISKLVCTDIADVSVKQCEQRYKDMKRKSRNERIFEAEFLTSDSTKELLSEKYIDPEIKFDICSCQFVYHYSFETYEQADTMLRNACERLCPGGFFIGTTPDGFELVKRLEASDTNSFGNDVYTVTFEKKGKYPLFGCKYDFSLEEVVNVPEFLVYFPVLVEMAKKYQMKLIYKKTFREFFEEKVKNDEQKMLLKRMKALESYPAAPNTKLVSGRTEDYEHAQKMVENGQIKLPLGTLSKSEWDATSIYLLFAFEKQA</sequence>
<protein>
    <recommendedName>
        <fullName>mRNA cap guanine-N(7) methyltransferase</fullName>
        <ecNumber evidence="1">2.1.1.56</ecNumber>
    </recommendedName>
    <alternativeName>
        <fullName>RG7MT1</fullName>
    </alternativeName>
    <alternativeName>
        <fullName>mRNA (guanine-N(7))-methyltransferase</fullName>
    </alternativeName>
    <alternativeName>
        <fullName>mRNA cap methyltransferase</fullName>
        <shortName>xCMT1</shortName>
    </alternativeName>
</protein>
<accession>Q9I8S2</accession>
<accession>Q52KX9</accession>
<evidence type="ECO:0000250" key="1">
    <source>
        <dbReference type="UniProtKB" id="O43148"/>
    </source>
</evidence>
<evidence type="ECO:0000255" key="2">
    <source>
        <dbReference type="PROSITE-ProRule" id="PRU00895"/>
    </source>
</evidence>
<evidence type="ECO:0000256" key="3">
    <source>
        <dbReference type="SAM" id="MobiDB-lite"/>
    </source>
</evidence>
<evidence type="ECO:0000269" key="4">
    <source>
    </source>
</evidence>
<evidence type="ECO:0000305" key="5"/>
<organism>
    <name type="scientific">Xenopus laevis</name>
    <name type="common">African clawed frog</name>
    <dbReference type="NCBI Taxonomy" id="8355"/>
    <lineage>
        <taxon>Eukaryota</taxon>
        <taxon>Metazoa</taxon>
        <taxon>Chordata</taxon>
        <taxon>Craniata</taxon>
        <taxon>Vertebrata</taxon>
        <taxon>Euteleostomi</taxon>
        <taxon>Amphibia</taxon>
        <taxon>Batrachia</taxon>
        <taxon>Anura</taxon>
        <taxon>Pipoidea</taxon>
        <taxon>Pipidae</taxon>
        <taxon>Xenopodinae</taxon>
        <taxon>Xenopus</taxon>
        <taxon>Xenopus</taxon>
    </lineage>
</organism>